<protein>
    <recommendedName>
        <fullName evidence="1">Peptide chain release factor 2</fullName>
        <shortName evidence="1">RF-2</shortName>
    </recommendedName>
</protein>
<evidence type="ECO:0000255" key="1">
    <source>
        <dbReference type="HAMAP-Rule" id="MF_00094"/>
    </source>
</evidence>
<comment type="function">
    <text evidence="1">Peptide chain release factor 2 directs the termination of translation in response to the peptide chain termination codons UGA and UAA.</text>
</comment>
<comment type="subcellular location">
    <subcellularLocation>
        <location evidence="1">Cytoplasm</location>
    </subcellularLocation>
</comment>
<comment type="PTM">
    <text evidence="1">Methylated by PrmC. Methylation increases the termination efficiency of RF2.</text>
</comment>
<comment type="similarity">
    <text evidence="1">Belongs to the prokaryotic/mitochondrial release factor family.</text>
</comment>
<proteinExistence type="inferred from homology"/>
<organism>
    <name type="scientific">Leuconostoc mesenteroides subsp. mesenteroides (strain ATCC 8293 / DSM 20343 / BCRC 11652 / CCM 1803 / JCM 6124 / NCDO 523 / NBRC 100496 / NCIMB 8023 / NCTC 12954 / NRRL B-1118 / 37Y)</name>
    <dbReference type="NCBI Taxonomy" id="203120"/>
    <lineage>
        <taxon>Bacteria</taxon>
        <taxon>Bacillati</taxon>
        <taxon>Bacillota</taxon>
        <taxon>Bacilli</taxon>
        <taxon>Lactobacillales</taxon>
        <taxon>Lactobacillaceae</taxon>
        <taxon>Leuconostoc</taxon>
    </lineage>
</organism>
<feature type="chain" id="PRO_1000004996" description="Peptide chain release factor 2">
    <location>
        <begin position="1"/>
        <end position="372"/>
    </location>
</feature>
<feature type="modified residue" description="N5-methylglutamine" evidence="1">
    <location>
        <position position="252"/>
    </location>
</feature>
<accession>Q03ZQ7</accession>
<dbReference type="EMBL" id="CP000414">
    <property type="protein sequence ID" value="ABJ61315.1"/>
    <property type="molecule type" value="Genomic_DNA"/>
</dbReference>
<dbReference type="RefSeq" id="WP_011679123.1">
    <property type="nucleotide sequence ID" value="NC_008531.1"/>
</dbReference>
<dbReference type="SMR" id="Q03ZQ7"/>
<dbReference type="EnsemblBacteria" id="ABJ61315">
    <property type="protein sequence ID" value="ABJ61315"/>
    <property type="gene ID" value="LEUM_0184"/>
</dbReference>
<dbReference type="GeneID" id="29577690"/>
<dbReference type="KEGG" id="lme:LEUM_0184"/>
<dbReference type="eggNOG" id="COG1186">
    <property type="taxonomic scope" value="Bacteria"/>
</dbReference>
<dbReference type="HOGENOM" id="CLU_036856_6_0_9"/>
<dbReference type="Proteomes" id="UP000000362">
    <property type="component" value="Chromosome"/>
</dbReference>
<dbReference type="GO" id="GO:0005737">
    <property type="term" value="C:cytoplasm"/>
    <property type="evidence" value="ECO:0007669"/>
    <property type="project" value="UniProtKB-SubCell"/>
</dbReference>
<dbReference type="GO" id="GO:0016149">
    <property type="term" value="F:translation release factor activity, codon specific"/>
    <property type="evidence" value="ECO:0007669"/>
    <property type="project" value="UniProtKB-UniRule"/>
</dbReference>
<dbReference type="Gene3D" id="3.30.160.20">
    <property type="match status" value="1"/>
</dbReference>
<dbReference type="Gene3D" id="3.30.70.1660">
    <property type="match status" value="1"/>
</dbReference>
<dbReference type="Gene3D" id="1.20.58.410">
    <property type="entry name" value="Release factor"/>
    <property type="match status" value="1"/>
</dbReference>
<dbReference type="HAMAP" id="MF_00094">
    <property type="entry name" value="Rel_fac_2"/>
    <property type="match status" value="1"/>
</dbReference>
<dbReference type="InterPro" id="IPR005139">
    <property type="entry name" value="PCRF"/>
</dbReference>
<dbReference type="InterPro" id="IPR000352">
    <property type="entry name" value="Pep_chain_release_fac_I"/>
</dbReference>
<dbReference type="InterPro" id="IPR045853">
    <property type="entry name" value="Pep_chain_release_fac_I_sf"/>
</dbReference>
<dbReference type="InterPro" id="IPR004374">
    <property type="entry name" value="PrfB"/>
</dbReference>
<dbReference type="NCBIfam" id="TIGR00020">
    <property type="entry name" value="prfB"/>
    <property type="match status" value="1"/>
</dbReference>
<dbReference type="PANTHER" id="PTHR43116:SF3">
    <property type="entry name" value="CLASS I PEPTIDE CHAIN RELEASE FACTOR"/>
    <property type="match status" value="1"/>
</dbReference>
<dbReference type="PANTHER" id="PTHR43116">
    <property type="entry name" value="PEPTIDE CHAIN RELEASE FACTOR 2"/>
    <property type="match status" value="1"/>
</dbReference>
<dbReference type="Pfam" id="PF03462">
    <property type="entry name" value="PCRF"/>
    <property type="match status" value="1"/>
</dbReference>
<dbReference type="Pfam" id="PF00472">
    <property type="entry name" value="RF-1"/>
    <property type="match status" value="1"/>
</dbReference>
<dbReference type="SMART" id="SM00937">
    <property type="entry name" value="PCRF"/>
    <property type="match status" value="1"/>
</dbReference>
<dbReference type="SUPFAM" id="SSF75620">
    <property type="entry name" value="Release factor"/>
    <property type="match status" value="1"/>
</dbReference>
<dbReference type="PROSITE" id="PS00745">
    <property type="entry name" value="RF_PROK_I"/>
    <property type="match status" value="1"/>
</dbReference>
<sequence length="372" mass="42344">MEIIDAKHAVSDMQENIERFRGTLDMEALTEEIADYENRMTEPDFWNDNEKAQKVIEENNVLKNRRDSFLNLTNQVEELELLIEMAVEDPEDEDTLGELEAGVAKAQKDIDAYNLEQLLTEPYDANNAILEIHPGSGGTESTDWGANLYRMYTRWAQQHDFQVETLDYHAGDEAGIDSATIKVTGHNAYGFLRSEKGVHRFVRISPFDSAGRRHTSFVSVDVMPELDDSIEVEVRDDDVKMDVFRSGGAGGQNVNKVSTGVRLTHEPTGIVVSSTVERTQYGNRDYAMRLLKSKLYQLELEKKEAERAALTGEKMENGWGSQIRSYVLHPYQMVKDHRTNYETNQPQAVLDGDLDPFINAYLQWQLSLKNPN</sequence>
<name>RF2_LEUMM</name>
<keyword id="KW-0963">Cytoplasm</keyword>
<keyword id="KW-0488">Methylation</keyword>
<keyword id="KW-0648">Protein biosynthesis</keyword>
<keyword id="KW-1185">Reference proteome</keyword>
<gene>
    <name evidence="1" type="primary">prfB</name>
    <name type="ordered locus">LEUM_0184</name>
</gene>
<reference key="1">
    <citation type="journal article" date="2006" name="Proc. Natl. Acad. Sci. U.S.A.">
        <title>Comparative genomics of the lactic acid bacteria.</title>
        <authorList>
            <person name="Makarova K.S."/>
            <person name="Slesarev A."/>
            <person name="Wolf Y.I."/>
            <person name="Sorokin A."/>
            <person name="Mirkin B."/>
            <person name="Koonin E.V."/>
            <person name="Pavlov A."/>
            <person name="Pavlova N."/>
            <person name="Karamychev V."/>
            <person name="Polouchine N."/>
            <person name="Shakhova V."/>
            <person name="Grigoriev I."/>
            <person name="Lou Y."/>
            <person name="Rohksar D."/>
            <person name="Lucas S."/>
            <person name="Huang K."/>
            <person name="Goodstein D.M."/>
            <person name="Hawkins T."/>
            <person name="Plengvidhya V."/>
            <person name="Welker D."/>
            <person name="Hughes J."/>
            <person name="Goh Y."/>
            <person name="Benson A."/>
            <person name="Baldwin K."/>
            <person name="Lee J.-H."/>
            <person name="Diaz-Muniz I."/>
            <person name="Dosti B."/>
            <person name="Smeianov V."/>
            <person name="Wechter W."/>
            <person name="Barabote R."/>
            <person name="Lorca G."/>
            <person name="Altermann E."/>
            <person name="Barrangou R."/>
            <person name="Ganesan B."/>
            <person name="Xie Y."/>
            <person name="Rawsthorne H."/>
            <person name="Tamir D."/>
            <person name="Parker C."/>
            <person name="Breidt F."/>
            <person name="Broadbent J.R."/>
            <person name="Hutkins R."/>
            <person name="O'Sullivan D."/>
            <person name="Steele J."/>
            <person name="Unlu G."/>
            <person name="Saier M.H. Jr."/>
            <person name="Klaenhammer T."/>
            <person name="Richardson P."/>
            <person name="Kozyavkin S."/>
            <person name="Weimer B.C."/>
            <person name="Mills D.A."/>
        </authorList>
    </citation>
    <scope>NUCLEOTIDE SEQUENCE [LARGE SCALE GENOMIC DNA]</scope>
    <source>
        <strain>ATCC 8293 / DSM 20343 / BCRC 11652 / CCM 1803 / JCM 6124 / NCDO 523 / NBRC 100496 / NCIMB 8023 / NCTC 12954 / NRRL B-1118 / 37Y</strain>
    </source>
</reference>